<sequence>MYQILIGCVWQKSPYINQCTEFQPPLSFVTPERMRRFMRCWARLELVYMLAWIVTTKLVKATRLDFTWGPGEPKRILEASCGSGPIMKGQLFTSPNIKNLLNRTTGIMVKAHCNPPEAILWVDTPPKPVWVNPFAVVQGLAEDVTNGNMPQDFKEKLLFALDDSLSQSQSSPDEILGPPPLGCFTGPFFLSPPKSKDIAEGLKDSCIPASYYANLQKT</sequence>
<reference evidence="3 4" key="1">
    <citation type="submission" date="2003-11" db="EMBL/GenBank/DDBJ databases">
        <authorList>
            <person name="Davis-Poynter N."/>
            <person name="Nugent J."/>
            <person name="Birch-Machin I."/>
            <person name="Allen G.P."/>
        </authorList>
    </citation>
    <scope>NUCLEOTIDE SEQUENCE [LARGE SCALE GENOMIC DNA]</scope>
</reference>
<dbReference type="EMBL" id="AY464052">
    <property type="protein sequence ID" value="AAS45946.1"/>
    <property type="molecule type" value="Genomic_DNA"/>
</dbReference>
<dbReference type="SMR" id="P84455"/>
<dbReference type="Proteomes" id="UP000008296">
    <property type="component" value="Segment"/>
</dbReference>
<dbReference type="GO" id="GO:0044177">
    <property type="term" value="C:host cell Golgi apparatus"/>
    <property type="evidence" value="ECO:0007669"/>
    <property type="project" value="UniProtKB-SubCell"/>
</dbReference>
<dbReference type="GO" id="GO:0020002">
    <property type="term" value="C:host cell plasma membrane"/>
    <property type="evidence" value="ECO:0007669"/>
    <property type="project" value="UniProtKB-SubCell"/>
</dbReference>
<dbReference type="GO" id="GO:0016020">
    <property type="term" value="C:membrane"/>
    <property type="evidence" value="ECO:0007669"/>
    <property type="project" value="UniProtKB-KW"/>
</dbReference>
<dbReference type="GO" id="GO:0019031">
    <property type="term" value="C:viral envelope"/>
    <property type="evidence" value="ECO:0007669"/>
    <property type="project" value="UniProtKB-KW"/>
</dbReference>
<dbReference type="GO" id="GO:0055036">
    <property type="term" value="C:virion membrane"/>
    <property type="evidence" value="ECO:0007669"/>
    <property type="project" value="UniProtKB-SubCell"/>
</dbReference>
<dbReference type="GO" id="GO:0019064">
    <property type="term" value="P:fusion of virus membrane with host plasma membrane"/>
    <property type="evidence" value="ECO:0007669"/>
    <property type="project" value="UniProtKB-KW"/>
</dbReference>
<dbReference type="GO" id="GO:0046718">
    <property type="term" value="P:symbiont entry into host cell"/>
    <property type="evidence" value="ECO:0007669"/>
    <property type="project" value="UniProtKB-KW"/>
</dbReference>
<dbReference type="Gene3D" id="3.30.390.170">
    <property type="match status" value="1"/>
</dbReference>
<dbReference type="HAMAP" id="MF_04034">
    <property type="entry name" value="HSV_GL_alphagamma"/>
    <property type="match status" value="1"/>
</dbReference>
<dbReference type="InterPro" id="IPR022200">
    <property type="entry name" value="Herpes_gL_C"/>
</dbReference>
<dbReference type="InterPro" id="IPR007923">
    <property type="entry name" value="Herpes_gL_N"/>
</dbReference>
<dbReference type="InterPro" id="IPR038311">
    <property type="entry name" value="Herpes_gL_N_sf"/>
</dbReference>
<dbReference type="InterPro" id="IPR034708">
    <property type="entry name" value="HSV_GL_alphagamma"/>
</dbReference>
<dbReference type="Pfam" id="PF12524">
    <property type="entry name" value="GlyL_C"/>
    <property type="match status" value="1"/>
</dbReference>
<dbReference type="Pfam" id="PF05259">
    <property type="entry name" value="Herpes_UL1"/>
    <property type="match status" value="1"/>
</dbReference>
<dbReference type="PROSITE" id="PS52024">
    <property type="entry name" value="GL_AHV"/>
    <property type="match status" value="1"/>
</dbReference>
<evidence type="ECO:0000255" key="1">
    <source>
        <dbReference type="HAMAP-Rule" id="MF_04034"/>
    </source>
</evidence>
<evidence type="ECO:0000255" key="2">
    <source>
        <dbReference type="PROSITE-ProRule" id="PRU01368"/>
    </source>
</evidence>
<evidence type="ECO:0000305" key="3"/>
<evidence type="ECO:0000312" key="4">
    <source>
        <dbReference type="EMBL" id="AAS45946.1"/>
    </source>
</evidence>
<protein>
    <recommendedName>
        <fullName evidence="1">Envelope glycoprotein L</fullName>
        <shortName evidence="1">gL</shortName>
    </recommendedName>
</protein>
<accession>P84455</accession>
<accession>Q6S6U2</accession>
<feature type="chain" id="PRO_0000038267" description="Envelope glycoprotein L">
    <location>
        <begin position="1"/>
        <end position="218"/>
    </location>
</feature>
<feature type="domain" description="gL alphaherpesvirus-type" evidence="2">
    <location>
        <begin position="60"/>
        <end position="218"/>
    </location>
</feature>
<feature type="region of interest" description="Interaction with gH" evidence="1">
    <location>
        <begin position="57"/>
        <end position="185"/>
    </location>
</feature>
<feature type="disulfide bond" evidence="2">
    <location>
        <begin position="81"/>
        <end position="113"/>
    </location>
</feature>
<feature type="disulfide bond" evidence="2">
    <location>
        <begin position="183"/>
        <end position="206"/>
    </location>
</feature>
<comment type="function">
    <text evidence="1">The heterodimer glycoprotein H-glycoprotein L is required for the fusion of viral and plasma membranes leading to virus entry into the host cell. Acts as a functional inhibitor of gH and maintains gH in an inhibited form. Upon binding to host integrins, gL dissociates from gH leading to activation of the viral fusion glycoproteins gB and gH.</text>
</comment>
<comment type="subunit">
    <text evidence="1">Interacts with glycoprotein H (gH); this interaction is necessary for the correct processing and cell surface expression of gH. The heterodimer gH/gL seems to interact with gB trimers during fusion.</text>
</comment>
<comment type="subcellular location">
    <subcellularLocation>
        <location evidence="1">Virion membrane</location>
        <topology evidence="1">Peripheral membrane protein</topology>
        <orientation evidence="1">Extracellular side</orientation>
    </subcellularLocation>
    <subcellularLocation>
        <location evidence="1">Host cell membrane</location>
        <topology evidence="1">Peripheral membrane protein</topology>
        <orientation evidence="1">Extracellular side</orientation>
    </subcellularLocation>
    <subcellularLocation>
        <location evidence="1">Host Golgi apparatus</location>
        <location evidence="1">Host trans-Golgi network</location>
    </subcellularLocation>
    <text evidence="1">gL associates with the extravirion surface through its binding to gH. During virion morphogenesis, this protein probably accumulates in the host trans-Golgi where secondary envelopment occurs.</text>
</comment>
<comment type="similarity">
    <text evidence="2">Belongs to the herpesviridae glycoprotein L (gL) family. Alphaherpesvirinae gL subfamily.</text>
</comment>
<name>GL_EHV1V</name>
<gene>
    <name evidence="1" type="primary">gL</name>
    <name type="ordered locus">62</name>
</gene>
<organism>
    <name type="scientific">Equine herpesvirus 1 (strain V592)</name>
    <name type="common">EHV-1</name>
    <name type="synonym">Equine abortion virus</name>
    <dbReference type="NCBI Taxonomy" id="310273"/>
    <lineage>
        <taxon>Viruses</taxon>
        <taxon>Duplodnaviria</taxon>
        <taxon>Heunggongvirae</taxon>
        <taxon>Peploviricota</taxon>
        <taxon>Herviviricetes</taxon>
        <taxon>Herpesvirales</taxon>
        <taxon>Orthoherpesviridae</taxon>
        <taxon>Alphaherpesvirinae</taxon>
        <taxon>Varicellovirus</taxon>
        <taxon>Varicellovirus equidalpha1</taxon>
        <taxon>Equid alphaherpesvirus 1</taxon>
    </lineage>
</organism>
<proteinExistence type="inferred from homology"/>
<organismHost>
    <name type="scientific">Equus caballus</name>
    <name type="common">Horse</name>
    <dbReference type="NCBI Taxonomy" id="9796"/>
</organismHost>
<keyword id="KW-1015">Disulfide bond</keyword>
<keyword id="KW-1169">Fusion of virus membrane with host cell membrane</keyword>
<keyword id="KW-1168">Fusion of virus membrane with host membrane</keyword>
<keyword id="KW-0325">Glycoprotein</keyword>
<keyword id="KW-1032">Host cell membrane</keyword>
<keyword id="KW-1040">Host Golgi apparatus</keyword>
<keyword id="KW-1043">Host membrane</keyword>
<keyword id="KW-0472">Membrane</keyword>
<keyword id="KW-0261">Viral envelope protein</keyword>
<keyword id="KW-1162">Viral penetration into host cytoplasm</keyword>
<keyword id="KW-0946">Virion</keyword>
<keyword id="KW-1160">Virus entry into host cell</keyword>